<organism>
    <name type="scientific">Arabidopsis thaliana</name>
    <name type="common">Mouse-ear cress</name>
    <dbReference type="NCBI Taxonomy" id="3702"/>
    <lineage>
        <taxon>Eukaryota</taxon>
        <taxon>Viridiplantae</taxon>
        <taxon>Streptophyta</taxon>
        <taxon>Embryophyta</taxon>
        <taxon>Tracheophyta</taxon>
        <taxon>Spermatophyta</taxon>
        <taxon>Magnoliopsida</taxon>
        <taxon>eudicotyledons</taxon>
        <taxon>Gunneridae</taxon>
        <taxon>Pentapetalae</taxon>
        <taxon>rosids</taxon>
        <taxon>malvids</taxon>
        <taxon>Brassicales</taxon>
        <taxon>Brassicaceae</taxon>
        <taxon>Camelineae</taxon>
        <taxon>Arabidopsis</taxon>
    </lineage>
</organism>
<comment type="function">
    <text evidence="8 9">Sucrose-cleaving enzyme that provides UDP-glucose and fructose for various metabolic pathways. Modulates metabolic homeostasis and directs carbon towards starch synthesis in developing seeds.</text>
</comment>
<comment type="catalytic activity">
    <reaction>
        <text>an NDP-alpha-D-glucose + D-fructose = a ribonucleoside 5'-diphosphate + sucrose + H(+)</text>
        <dbReference type="Rhea" id="RHEA:16241"/>
        <dbReference type="ChEBI" id="CHEBI:15378"/>
        <dbReference type="ChEBI" id="CHEBI:17992"/>
        <dbReference type="ChEBI" id="CHEBI:37721"/>
        <dbReference type="ChEBI" id="CHEBI:57930"/>
        <dbReference type="ChEBI" id="CHEBI:76533"/>
        <dbReference type="EC" id="2.4.1.13"/>
    </reaction>
</comment>
<comment type="subcellular location">
    <subcellularLocation>
        <location evidence="6">Cytoplasm</location>
    </subcellularLocation>
    <subcellularLocation>
        <location evidence="6">Plastid membrane</location>
        <topology evidence="6">Peripheral membrane protein</topology>
    </subcellularLocation>
    <text>Associated with plastid membranes during the maturation phase of the seed.</text>
</comment>
<comment type="tissue specificity">
    <text evidence="3 4 5 6">Detected in the whole plant but at lower levels. Predominantly expressed in developing siliques. Also detected in the root tip. Detected in the embryo, endosperm and seed coat (at the protein level).</text>
</comment>
<comment type="developmental stage">
    <text evidence="3 4">Specifically and highly expressed during seed maturation at 12 days after flowering (at the protein level).</text>
</comment>
<comment type="induction">
    <text evidence="2 7 9">By anaerobic stress and by glucose. Positively regulated by the NF-Y/HAP transcription factor complex at least composed of NFYB9/LEC1 or NFYB6/L1L and NFYC2/HAP5B in association with DPBF2/BZIP67. Positively regulated by LEC2.</text>
</comment>
<comment type="disruption phenotype">
    <text evidence="3 8">No visible phenotype. Diminution of the starch content of developing seeds and increased lipid accumulation early during seed development.</text>
</comment>
<comment type="similarity">
    <text evidence="10">Belongs to the glycosyltransferase 1 family. Plant sucrose synthase subfamily.</text>
</comment>
<comment type="sequence caution" evidence="10">
    <conflict type="erroneous gene model prediction">
        <sequence resource="EMBL-CDS" id="BAB10337"/>
    </conflict>
</comment>
<comment type="sequence caution" evidence="10">
    <conflict type="miscellaneous discrepancy">
        <sequence resource="EMBL-CDS" id="CAA43303"/>
    </conflict>
    <text>Sequencing errors.</text>
</comment>
<evidence type="ECO:0000250" key="1"/>
<evidence type="ECO:0000269" key="2">
    <source>
    </source>
</evidence>
<evidence type="ECO:0000269" key="3">
    <source>
    </source>
</evidence>
<evidence type="ECO:0000269" key="4">
    <source>
    </source>
</evidence>
<evidence type="ECO:0000269" key="5">
    <source>
    </source>
</evidence>
<evidence type="ECO:0000269" key="6">
    <source>
    </source>
</evidence>
<evidence type="ECO:0000269" key="7">
    <source>
    </source>
</evidence>
<evidence type="ECO:0000269" key="8">
    <source>
    </source>
</evidence>
<evidence type="ECO:0000269" key="9">
    <source>
    </source>
</evidence>
<evidence type="ECO:0000305" key="10"/>
<proteinExistence type="evidence at transcript level"/>
<feature type="chain" id="PRO_0000204645" description="Sucrose synthase 2">
    <location>
        <begin position="1"/>
        <end position="807"/>
    </location>
</feature>
<feature type="region of interest" description="GT-B glycosyltransferase" evidence="1">
    <location>
        <begin position="274"/>
        <end position="752"/>
    </location>
</feature>
<protein>
    <recommendedName>
        <fullName>Sucrose synthase 2</fullName>
        <shortName>AtSUS2</shortName>
        <ecNumber>2.4.1.13</ecNumber>
    </recommendedName>
    <alternativeName>
        <fullName>Sucrose-UDP glucosyltransferase 2</fullName>
    </alternativeName>
</protein>
<name>SUS2_ARATH</name>
<dbReference type="EC" id="2.4.1.13"/>
<dbReference type="EMBL" id="X60987">
    <property type="protein sequence ID" value="CAA43303.1"/>
    <property type="status" value="ALT_SEQ"/>
    <property type="molecule type" value="Genomic_DNA"/>
</dbReference>
<dbReference type="EMBL" id="AB016872">
    <property type="protein sequence ID" value="BAB10337.1"/>
    <property type="status" value="ALT_SEQ"/>
    <property type="molecule type" value="Genomic_DNA"/>
</dbReference>
<dbReference type="EMBL" id="CP002688">
    <property type="protein sequence ID" value="AED95780.1"/>
    <property type="molecule type" value="Genomic_DNA"/>
</dbReference>
<dbReference type="PIR" id="S19125">
    <property type="entry name" value="YUMU"/>
</dbReference>
<dbReference type="RefSeq" id="NP_199730.1">
    <property type="nucleotide sequence ID" value="NM_124296.3"/>
</dbReference>
<dbReference type="SMR" id="Q00917"/>
<dbReference type="BioGRID" id="20224">
    <property type="interactions" value="1"/>
</dbReference>
<dbReference type="FunCoup" id="Q00917">
    <property type="interactions" value="170"/>
</dbReference>
<dbReference type="IntAct" id="Q00917">
    <property type="interactions" value="1"/>
</dbReference>
<dbReference type="STRING" id="3702.Q00917"/>
<dbReference type="CAZy" id="GT4">
    <property type="family name" value="Glycosyltransferase Family 4"/>
</dbReference>
<dbReference type="iPTMnet" id="Q00917"/>
<dbReference type="PaxDb" id="3702-AT5G49190.1"/>
<dbReference type="ProteomicsDB" id="228403"/>
<dbReference type="EnsemblPlants" id="AT5G49190.1">
    <property type="protein sequence ID" value="AT5G49190.1"/>
    <property type="gene ID" value="AT5G49190"/>
</dbReference>
<dbReference type="GeneID" id="834978"/>
<dbReference type="Gramene" id="AT5G49190.1">
    <property type="protein sequence ID" value="AT5G49190.1"/>
    <property type="gene ID" value="AT5G49190"/>
</dbReference>
<dbReference type="KEGG" id="ath:AT5G49190"/>
<dbReference type="Araport" id="AT5G49190"/>
<dbReference type="TAIR" id="AT5G49190">
    <property type="gene designation" value="SUS2"/>
</dbReference>
<dbReference type="eggNOG" id="KOG0853">
    <property type="taxonomic scope" value="Eukaryota"/>
</dbReference>
<dbReference type="HOGENOM" id="CLU_019158_1_0_1"/>
<dbReference type="InParanoid" id="Q00917"/>
<dbReference type="BRENDA" id="2.4.1.13">
    <property type="organism ID" value="399"/>
</dbReference>
<dbReference type="PRO" id="PR:Q00917"/>
<dbReference type="Proteomes" id="UP000006548">
    <property type="component" value="Chromosome 5"/>
</dbReference>
<dbReference type="ExpressionAtlas" id="Q00917">
    <property type="expression patterns" value="baseline and differential"/>
</dbReference>
<dbReference type="GO" id="GO:0005829">
    <property type="term" value="C:cytosol"/>
    <property type="evidence" value="ECO:0000314"/>
    <property type="project" value="TAIR"/>
</dbReference>
<dbReference type="GO" id="GO:0009505">
    <property type="term" value="C:plant-type cell wall"/>
    <property type="evidence" value="ECO:0007005"/>
    <property type="project" value="TAIR"/>
</dbReference>
<dbReference type="GO" id="GO:0042170">
    <property type="term" value="C:plastid membrane"/>
    <property type="evidence" value="ECO:0007669"/>
    <property type="project" value="UniProtKB-SubCell"/>
</dbReference>
<dbReference type="GO" id="GO:0016157">
    <property type="term" value="F:sucrose synthase activity"/>
    <property type="evidence" value="ECO:0000315"/>
    <property type="project" value="TAIR"/>
</dbReference>
<dbReference type="GO" id="GO:0001666">
    <property type="term" value="P:response to hypoxia"/>
    <property type="evidence" value="ECO:0000270"/>
    <property type="project" value="TAIR"/>
</dbReference>
<dbReference type="GO" id="GO:0010431">
    <property type="term" value="P:seed maturation"/>
    <property type="evidence" value="ECO:0000315"/>
    <property type="project" value="TAIR"/>
</dbReference>
<dbReference type="GO" id="GO:0005982">
    <property type="term" value="P:starch metabolic process"/>
    <property type="evidence" value="ECO:0000315"/>
    <property type="project" value="TAIR"/>
</dbReference>
<dbReference type="GO" id="GO:0005985">
    <property type="term" value="P:sucrose metabolic process"/>
    <property type="evidence" value="ECO:0000315"/>
    <property type="project" value="TAIR"/>
</dbReference>
<dbReference type="CDD" id="cd03800">
    <property type="entry name" value="GT4_sucrose_synthase"/>
    <property type="match status" value="1"/>
</dbReference>
<dbReference type="FunFam" id="1.20.120.1230:FF:000001">
    <property type="entry name" value="Sucrose synthase"/>
    <property type="match status" value="1"/>
</dbReference>
<dbReference type="FunFam" id="3.10.450.330:FF:000001">
    <property type="entry name" value="Sucrose synthase"/>
    <property type="match status" value="1"/>
</dbReference>
<dbReference type="FunFam" id="3.40.50.2000:FF:000006">
    <property type="entry name" value="Sucrose synthase"/>
    <property type="match status" value="1"/>
</dbReference>
<dbReference type="Gene3D" id="1.20.120.1230">
    <property type="match status" value="1"/>
</dbReference>
<dbReference type="Gene3D" id="3.10.450.330">
    <property type="match status" value="1"/>
</dbReference>
<dbReference type="Gene3D" id="3.40.50.2000">
    <property type="entry name" value="Glycogen Phosphorylase B"/>
    <property type="match status" value="2"/>
</dbReference>
<dbReference type="InterPro" id="IPR001296">
    <property type="entry name" value="Glyco_trans_1"/>
</dbReference>
<dbReference type="InterPro" id="IPR000368">
    <property type="entry name" value="Sucrose_synth_GT-B1"/>
</dbReference>
<dbReference type="InterPro" id="IPR012820">
    <property type="entry name" value="Sucrose_synthase_pln/cyn"/>
</dbReference>
<dbReference type="InterPro" id="IPR056736">
    <property type="entry name" value="SUS_EPBD"/>
</dbReference>
<dbReference type="InterPro" id="IPR056735">
    <property type="entry name" value="SUS_N"/>
</dbReference>
<dbReference type="NCBIfam" id="TIGR02470">
    <property type="entry name" value="sucr_synth"/>
    <property type="match status" value="1"/>
</dbReference>
<dbReference type="PANTHER" id="PTHR45839">
    <property type="match status" value="1"/>
</dbReference>
<dbReference type="PANTHER" id="PTHR45839:SF9">
    <property type="entry name" value="SUCROSE SYNTHASE 2"/>
    <property type="match status" value="1"/>
</dbReference>
<dbReference type="Pfam" id="PF00534">
    <property type="entry name" value="Glycos_transf_1"/>
    <property type="match status" value="1"/>
</dbReference>
<dbReference type="Pfam" id="PF00862">
    <property type="entry name" value="GT-B_Sucrose_synth"/>
    <property type="match status" value="1"/>
</dbReference>
<dbReference type="Pfam" id="PF24862">
    <property type="entry name" value="SUS_EPBD"/>
    <property type="match status" value="1"/>
</dbReference>
<dbReference type="Pfam" id="PF24861">
    <property type="entry name" value="SUS_N"/>
    <property type="match status" value="1"/>
</dbReference>
<dbReference type="SUPFAM" id="SSF53756">
    <property type="entry name" value="UDP-Glycosyltransferase/glycogen phosphorylase"/>
    <property type="match status" value="1"/>
</dbReference>
<reference key="1">
    <citation type="journal article" date="1992" name="Plant Mol. Biol.">
        <title>Sucrose synthase of Arabidopsis: genomic cloning and sequence characterization.</title>
        <authorList>
            <person name="Chopra S."/>
            <person name="Del-Favero J."/>
            <person name="Dolferus R."/>
            <person name="Jacobs M."/>
        </authorList>
    </citation>
    <scope>NUCLEOTIDE SEQUENCE [GENOMIC DNA]</scope>
    <source>
        <strain>cv. Columbia</strain>
    </source>
</reference>
<reference key="2">
    <citation type="journal article" date="1998" name="DNA Res.">
        <title>Structural analysis of Arabidopsis thaliana chromosome 5. VIII. Sequence features of the regions of 1,081,958 bp covered by seventeen physically assigned P1 and TAC clones.</title>
        <authorList>
            <person name="Asamizu E."/>
            <person name="Sato S."/>
            <person name="Kaneko T."/>
            <person name="Nakamura Y."/>
            <person name="Kotani H."/>
            <person name="Miyajima N."/>
            <person name="Tabata S."/>
        </authorList>
    </citation>
    <scope>NUCLEOTIDE SEQUENCE [LARGE SCALE GENOMIC DNA]</scope>
    <source>
        <strain>cv. Columbia</strain>
    </source>
</reference>
<reference key="3">
    <citation type="journal article" date="2017" name="Plant J.">
        <title>Araport11: a complete reannotation of the Arabidopsis thaliana reference genome.</title>
        <authorList>
            <person name="Cheng C.Y."/>
            <person name="Krishnakumar V."/>
            <person name="Chan A.P."/>
            <person name="Thibaud-Nissen F."/>
            <person name="Schobel S."/>
            <person name="Town C.D."/>
        </authorList>
    </citation>
    <scope>GENOME REANNOTATION</scope>
    <source>
        <strain>cv. Columbia</strain>
    </source>
</reference>
<reference key="4">
    <citation type="journal article" date="1999" name="Biochem. J.">
        <title>Sugar/osmoticum levels modulate differential abscisic acid-independent expression of two stress-responsive sucrose synthase genes in Arabidopsis.</title>
        <authorList>
            <person name="Dejardin A."/>
            <person name="Sokolov L.N."/>
            <person name="Kleczkowski L.A."/>
        </authorList>
    </citation>
    <scope>INDUCTION</scope>
</reference>
<reference key="5">
    <citation type="journal article" date="2004" name="J. Exp. Bot.">
        <title>Structure and expression profile of the sucrose synthase multigene family in Arabidopsis.</title>
        <authorList>
            <person name="Baud S."/>
            <person name="Vaultier M.N."/>
            <person name="Rochat C."/>
        </authorList>
    </citation>
    <scope>GENE FAMILY</scope>
    <scope>TISSUE SPECIFICITY</scope>
    <scope>DEVELOPMENTAL STAGE</scope>
    <scope>DISRUPTION PHENOTYPE</scope>
</reference>
<reference key="6">
    <citation type="journal article" date="2007" name="Plant J.">
        <title>Analysis of the sucrose synthase gene family in Arabidopsis.</title>
        <authorList>
            <person name="Bieniawska Z."/>
            <person name="Paul Barratt D.H."/>
            <person name="Garlick A.P."/>
            <person name="Thole V."/>
            <person name="Kruger N.J."/>
            <person name="Martin C."/>
            <person name="Zrenner R."/>
            <person name="Smith A.M."/>
        </authorList>
    </citation>
    <scope>TISSUE SPECIFICITY</scope>
    <scope>DEVELOPMENTAL STAGE</scope>
</reference>
<reference key="7">
    <citation type="journal article" date="2008" name="J. Exp. Bot.">
        <title>Localization of sucrose synthase in developing seed and siliques of Arabidopsis thaliana reveals diverse roles for SUS during development.</title>
        <authorList>
            <person name="Fallahi H."/>
            <person name="Scofield G.N."/>
            <person name="Badger M.R."/>
            <person name="Chow W.S."/>
            <person name="Furbank R.T."/>
            <person name="Ruan Y.L."/>
        </authorList>
    </citation>
    <scope>TISSUE SPECIFICITY</scope>
</reference>
<reference key="8">
    <citation type="journal article" date="2008" name="Plant Cell Physiol.">
        <title>Study of AtSUS2 localization in seeds reveals a strong association with plastids.</title>
        <authorList>
            <person name="Angeles-Nunez J.G."/>
            <person name="Kronenberger J."/>
            <person name="Wuilleme S."/>
            <person name="Lepiniec L."/>
            <person name="Rochat C."/>
        </authorList>
    </citation>
    <scope>TISSUE SPECIFICITY</scope>
    <scope>SUBCELLULAR LOCATION</scope>
</reference>
<reference key="9">
    <citation type="journal article" date="2009" name="Plant J.">
        <title>Arabidopsis NF-YB subunits LEC1 and LEC1-LIKE activate transcription by interacting with seed-specific ABRE-binding factors.</title>
        <authorList>
            <person name="Yamamoto A."/>
            <person name="Kagaya Y."/>
            <person name="Toyoshima R."/>
            <person name="Kagaya M."/>
            <person name="Takeda S."/>
            <person name="Hattori T."/>
        </authorList>
    </citation>
    <scope>INDUCTION</scope>
</reference>
<reference key="10">
    <citation type="journal article" date="2010" name="Planta">
        <title>Arabidopsis sucrose synthase 2 and 3 modulate metabolic homeostasis and direct carbon towards starch synthesis in developing seeds.</title>
        <authorList>
            <person name="Angeles-Nunez J.G."/>
            <person name="Tiessen A."/>
        </authorList>
    </citation>
    <scope>FUNCTION</scope>
    <scope>DISRUPTION PHENOTYPE</scope>
</reference>
<reference key="11">
    <citation type="journal article" date="2012" name="Plant Mol. Biol.">
        <title>Regulation of AtSUS2 and AtSUS3 by glucose and the transcription factor LEC2 in different tissues and at different stages of Arabidopsis seed development.</title>
        <authorList>
            <person name="Angeles-Nunez J.G."/>
            <person name="Tiessen A."/>
        </authorList>
    </citation>
    <scope>FUNCTION</scope>
    <scope>INDUCTION BY LEC2</scope>
</reference>
<keyword id="KW-0963">Cytoplasm</keyword>
<keyword id="KW-0328">Glycosyltransferase</keyword>
<keyword id="KW-0472">Membrane</keyword>
<keyword id="KW-0934">Plastid</keyword>
<keyword id="KW-1185">Reference proteome</keyword>
<keyword id="KW-0346">Stress response</keyword>
<keyword id="KW-0808">Transferase</keyword>
<gene>
    <name type="primary">SUS2</name>
    <name type="synonym">SSA</name>
    <name type="ordered locus">At5g49190</name>
    <name type="ORF">K21P3.6</name>
</gene>
<sequence length="807" mass="92064">MPTGRFETMREWVYDAISAQRNELLSLFSRYVAQGKGILQSHQLIDEFLKTVKVDGTLEDLNKSPFMKVLQSAEEAIVLPPFVALAIRPRPGVREYVRVNVYELSVDHLTVSEYLRFKEELVNGHANGDYLLELDFEPFNATLPRPTRSSSIGNGVQFLNRHLSSIMFRNKESMEPLLEFLRTHKHDGRPMMLNDRIQNIPILQGALARAEEFLSKLPLATPYSEFEFELQGMGFERGWGDTAQKVSEMVHLLLDILQAPDPSVLETFLGRIPMVFNVVILSPHGYFGQANVLGLPDTGGQVVYILDQVRALENEMLLRIQKQGLEVIPKILIVTRLLPEAKGTTCNQRLERVSGTEHAHILRIPFRTEKGILRKWISRFDVWPYLETFAEDASNEISAELQGVPNLIIGNYSDGNLVASLLASKLGVIQCNIAHALEKTKYPESDIYWRNHEDKYHFSSQFTADLIAMNNADFIITSTYQEIAGSKNNVGQYESHTAFTMPGLYRVVHGIDVFDPKFNIVSPGADMTIYFPYSDKERRLTALHESIEELLFSAEQNDEHVGLLSDQSKPIIFSMARLDRVKNLTGLVECYAKNSKLRELANLVIVGGYIDENQSRDREEMAEIQKMHSLIEQYDLHGEFRWIAAQMNRARNGELYRYIADTKGVFVQPAFYEAFGLTVVESMTCALPTFATCHGGPAEIIENGVSGFHIDPYHPDQVAATLVSFFETCNTNPNHWVKISEGGLKRIYERYTWKKYSERLLTLAGVYAFWKHVSKLERRETRRYLEMFYSLKFRDLANSIPLATDEN</sequence>
<accession>Q00917</accession>
<accession>F4K4S0</accession>
<accession>Q9FJ20</accession>